<keyword id="KW-0963">Cytoplasm</keyword>
<keyword id="KW-0489">Methyltransferase</keyword>
<keyword id="KW-0949">S-adenosyl-L-methionine</keyword>
<keyword id="KW-0808">Transferase</keyword>
<proteinExistence type="inferred from homology"/>
<feature type="chain" id="PRO_1000046096" description="Ribosomal protein L11 methyltransferase">
    <location>
        <begin position="1"/>
        <end position="293"/>
    </location>
</feature>
<feature type="binding site" evidence="1">
    <location>
        <position position="145"/>
    </location>
    <ligand>
        <name>S-adenosyl-L-methionine</name>
        <dbReference type="ChEBI" id="CHEBI:59789"/>
    </ligand>
</feature>
<feature type="binding site" evidence="1">
    <location>
        <position position="166"/>
    </location>
    <ligand>
        <name>S-adenosyl-L-methionine</name>
        <dbReference type="ChEBI" id="CHEBI:59789"/>
    </ligand>
</feature>
<feature type="binding site" evidence="1">
    <location>
        <position position="188"/>
    </location>
    <ligand>
        <name>S-adenosyl-L-methionine</name>
        <dbReference type="ChEBI" id="CHEBI:59789"/>
    </ligand>
</feature>
<feature type="binding site" evidence="1">
    <location>
        <position position="230"/>
    </location>
    <ligand>
        <name>S-adenosyl-L-methionine</name>
        <dbReference type="ChEBI" id="CHEBI:59789"/>
    </ligand>
</feature>
<protein>
    <recommendedName>
        <fullName evidence="1">Ribosomal protein L11 methyltransferase</fullName>
        <shortName evidence="1">L11 Mtase</shortName>
        <ecNumber evidence="1">2.1.1.-</ecNumber>
    </recommendedName>
</protein>
<evidence type="ECO:0000255" key="1">
    <source>
        <dbReference type="HAMAP-Rule" id="MF_00735"/>
    </source>
</evidence>
<dbReference type="EC" id="2.1.1.-" evidence="1"/>
<dbReference type="EMBL" id="CP000266">
    <property type="protein sequence ID" value="ABF05334.1"/>
    <property type="molecule type" value="Genomic_DNA"/>
</dbReference>
<dbReference type="RefSeq" id="WP_001145827.1">
    <property type="nucleotide sequence ID" value="NC_008258.1"/>
</dbReference>
<dbReference type="SMR" id="Q0T031"/>
<dbReference type="GeneID" id="75206107"/>
<dbReference type="KEGG" id="sfv:SFV_3284"/>
<dbReference type="HOGENOM" id="CLU_049382_4_1_6"/>
<dbReference type="Proteomes" id="UP000000659">
    <property type="component" value="Chromosome"/>
</dbReference>
<dbReference type="GO" id="GO:0005829">
    <property type="term" value="C:cytosol"/>
    <property type="evidence" value="ECO:0007669"/>
    <property type="project" value="TreeGrafter"/>
</dbReference>
<dbReference type="GO" id="GO:0016279">
    <property type="term" value="F:protein-lysine N-methyltransferase activity"/>
    <property type="evidence" value="ECO:0007669"/>
    <property type="project" value="TreeGrafter"/>
</dbReference>
<dbReference type="GO" id="GO:0032259">
    <property type="term" value="P:methylation"/>
    <property type="evidence" value="ECO:0007669"/>
    <property type="project" value="UniProtKB-KW"/>
</dbReference>
<dbReference type="CDD" id="cd02440">
    <property type="entry name" value="AdoMet_MTases"/>
    <property type="match status" value="1"/>
</dbReference>
<dbReference type="FunFam" id="3.40.50.150:FF:000021">
    <property type="entry name" value="Ribosomal protein L11 methyltransferase"/>
    <property type="match status" value="1"/>
</dbReference>
<dbReference type="Gene3D" id="3.40.50.150">
    <property type="entry name" value="Vaccinia Virus protein VP39"/>
    <property type="match status" value="1"/>
</dbReference>
<dbReference type="HAMAP" id="MF_00735">
    <property type="entry name" value="Methyltr_PrmA"/>
    <property type="match status" value="1"/>
</dbReference>
<dbReference type="InterPro" id="IPR050078">
    <property type="entry name" value="Ribosomal_L11_MeTrfase_PrmA"/>
</dbReference>
<dbReference type="InterPro" id="IPR004498">
    <property type="entry name" value="Ribosomal_PrmA_MeTrfase"/>
</dbReference>
<dbReference type="InterPro" id="IPR029063">
    <property type="entry name" value="SAM-dependent_MTases_sf"/>
</dbReference>
<dbReference type="NCBIfam" id="TIGR00406">
    <property type="entry name" value="prmA"/>
    <property type="match status" value="1"/>
</dbReference>
<dbReference type="PANTHER" id="PTHR43648">
    <property type="entry name" value="ELECTRON TRANSFER FLAVOPROTEIN BETA SUBUNIT LYSINE METHYLTRANSFERASE"/>
    <property type="match status" value="1"/>
</dbReference>
<dbReference type="PANTHER" id="PTHR43648:SF1">
    <property type="entry name" value="ELECTRON TRANSFER FLAVOPROTEIN BETA SUBUNIT LYSINE METHYLTRANSFERASE"/>
    <property type="match status" value="1"/>
</dbReference>
<dbReference type="Pfam" id="PF06325">
    <property type="entry name" value="PrmA"/>
    <property type="match status" value="1"/>
</dbReference>
<dbReference type="PIRSF" id="PIRSF000401">
    <property type="entry name" value="RPL11_MTase"/>
    <property type="match status" value="1"/>
</dbReference>
<dbReference type="SUPFAM" id="SSF53335">
    <property type="entry name" value="S-adenosyl-L-methionine-dependent methyltransferases"/>
    <property type="match status" value="1"/>
</dbReference>
<sequence>MPWIQLKLNTTGANAEDLSDALMEAGAVSITFQDTHDTPVFEPLPGETRLWGDTDVIGLFDAETDMNDVVAILENHPLLGAGFAHKIEQLEDKDWEREWMDNFHPMRFGERLWICPSWRDVPDENAVNVMLDPGLAFGTGTHPTTSLCLQWLDSLDLTGKTVIDFGCGSGILAIAALKLGAAKAIGIDIDPQAIQASRDNAERNGVSDRLELYLPKDQPEEMKADVVVANILAGPLRELAPLISVLPVSGGLLGLSGILASQAESVCEAYADSFALDPVVEKEEWCRITGRKN</sequence>
<comment type="function">
    <text evidence="1">Methylates ribosomal protein L11.</text>
</comment>
<comment type="catalytic activity">
    <reaction evidence="1">
        <text>L-lysyl-[protein] + 3 S-adenosyl-L-methionine = N(6),N(6),N(6)-trimethyl-L-lysyl-[protein] + 3 S-adenosyl-L-homocysteine + 3 H(+)</text>
        <dbReference type="Rhea" id="RHEA:54192"/>
        <dbReference type="Rhea" id="RHEA-COMP:9752"/>
        <dbReference type="Rhea" id="RHEA-COMP:13826"/>
        <dbReference type="ChEBI" id="CHEBI:15378"/>
        <dbReference type="ChEBI" id="CHEBI:29969"/>
        <dbReference type="ChEBI" id="CHEBI:57856"/>
        <dbReference type="ChEBI" id="CHEBI:59789"/>
        <dbReference type="ChEBI" id="CHEBI:61961"/>
    </reaction>
</comment>
<comment type="subcellular location">
    <subcellularLocation>
        <location evidence="1">Cytoplasm</location>
    </subcellularLocation>
</comment>
<comment type="similarity">
    <text evidence="1">Belongs to the methyltransferase superfamily. PrmA family.</text>
</comment>
<reference key="1">
    <citation type="journal article" date="2006" name="BMC Genomics">
        <title>Complete genome sequence of Shigella flexneri 5b and comparison with Shigella flexneri 2a.</title>
        <authorList>
            <person name="Nie H."/>
            <person name="Yang F."/>
            <person name="Zhang X."/>
            <person name="Yang J."/>
            <person name="Chen L."/>
            <person name="Wang J."/>
            <person name="Xiong Z."/>
            <person name="Peng J."/>
            <person name="Sun L."/>
            <person name="Dong J."/>
            <person name="Xue Y."/>
            <person name="Xu X."/>
            <person name="Chen S."/>
            <person name="Yao Z."/>
            <person name="Shen Y."/>
            <person name="Jin Q."/>
        </authorList>
    </citation>
    <scope>NUCLEOTIDE SEQUENCE [LARGE SCALE GENOMIC DNA]</scope>
    <source>
        <strain>8401</strain>
    </source>
</reference>
<name>PRMA_SHIF8</name>
<gene>
    <name evidence="1" type="primary">prmA</name>
    <name type="ordered locus">SFV_3284</name>
</gene>
<accession>Q0T031</accession>
<organism>
    <name type="scientific">Shigella flexneri serotype 5b (strain 8401)</name>
    <dbReference type="NCBI Taxonomy" id="373384"/>
    <lineage>
        <taxon>Bacteria</taxon>
        <taxon>Pseudomonadati</taxon>
        <taxon>Pseudomonadota</taxon>
        <taxon>Gammaproteobacteria</taxon>
        <taxon>Enterobacterales</taxon>
        <taxon>Enterobacteriaceae</taxon>
        <taxon>Shigella</taxon>
    </lineage>
</organism>